<keyword id="KW-1185">Reference proteome</keyword>
<comment type="similarity">
    <text evidence="1">Belongs to the HAD-like hydrolase superfamily.</text>
</comment>
<protein>
    <recommendedName>
        <fullName>Haloacid dehalogenase-like hydrolase domain-containing protein 3</fullName>
    </recommendedName>
</protein>
<evidence type="ECO:0000305" key="1"/>
<gene>
    <name type="primary">hdhd3</name>
</gene>
<sequence length="244" mass="27680">MSLRLITWDVKDTLLRVRVPVGQQYYAEAKKRGLCVNPGTLETSFRNAYRSHSRLFPNYGLAQGMSSRQWWLDVVLQTFRLSGIEDSDTVQSLAKQLYQDFSTAHNWALVPGAREALDSCTNLGLRMAVISNFDRRLEELLRQCCLERYFDFVVTAESAGVAKPHLGIFHKALSLAKVPPHQAVHVGDDYVNDYCAARMVGMHSYLIHPKTPPKLQWNIPEEHVIQSPEQLIPKLVGVLKNSMT</sequence>
<proteinExistence type="evidence at transcript level"/>
<name>HDHD3_XENLA</name>
<feature type="chain" id="PRO_0000287316" description="Haloacid dehalogenase-like hydrolase domain-containing protein 3">
    <location>
        <begin position="1"/>
        <end position="244"/>
    </location>
</feature>
<organism>
    <name type="scientific">Xenopus laevis</name>
    <name type="common">African clawed frog</name>
    <dbReference type="NCBI Taxonomy" id="8355"/>
    <lineage>
        <taxon>Eukaryota</taxon>
        <taxon>Metazoa</taxon>
        <taxon>Chordata</taxon>
        <taxon>Craniata</taxon>
        <taxon>Vertebrata</taxon>
        <taxon>Euteleostomi</taxon>
        <taxon>Amphibia</taxon>
        <taxon>Batrachia</taxon>
        <taxon>Anura</taxon>
        <taxon>Pipoidea</taxon>
        <taxon>Pipidae</taxon>
        <taxon>Xenopodinae</taxon>
        <taxon>Xenopus</taxon>
        <taxon>Xenopus</taxon>
    </lineage>
</organism>
<dbReference type="EMBL" id="BC088963">
    <property type="protein sequence ID" value="AAH88963.1"/>
    <property type="molecule type" value="mRNA"/>
</dbReference>
<dbReference type="RefSeq" id="NP_001088980.1">
    <property type="nucleotide sequence ID" value="NM_001095511.1"/>
</dbReference>
<dbReference type="SMR" id="Q5HZL9"/>
<dbReference type="DNASU" id="496361"/>
<dbReference type="GeneID" id="496361"/>
<dbReference type="KEGG" id="xla:496361"/>
<dbReference type="AGR" id="Xenbase:XB-GENE-6252079"/>
<dbReference type="CTD" id="496361"/>
<dbReference type="Xenbase" id="XB-GENE-6252079">
    <property type="gene designation" value="hdhd3.L"/>
</dbReference>
<dbReference type="OMA" id="WWRQLIA"/>
<dbReference type="OrthoDB" id="444127at2759"/>
<dbReference type="Proteomes" id="UP000186698">
    <property type="component" value="Chromosome 8L"/>
</dbReference>
<dbReference type="Bgee" id="496361">
    <property type="expression patterns" value="Expressed in egg cell and 19 other cell types or tissues"/>
</dbReference>
<dbReference type="GO" id="GO:0005634">
    <property type="term" value="C:nucleus"/>
    <property type="evidence" value="ECO:0000318"/>
    <property type="project" value="GO_Central"/>
</dbReference>
<dbReference type="CDD" id="cd16415">
    <property type="entry name" value="HAD_dREG-2_like"/>
    <property type="match status" value="1"/>
</dbReference>
<dbReference type="Gene3D" id="3.40.50.1000">
    <property type="entry name" value="HAD superfamily/HAD-like"/>
    <property type="match status" value="1"/>
</dbReference>
<dbReference type="Gene3D" id="1.10.150.720">
    <property type="entry name" value="Haloacid dehalogenase-like hydrolase"/>
    <property type="match status" value="1"/>
</dbReference>
<dbReference type="InterPro" id="IPR051828">
    <property type="entry name" value="HAD-like_hydrolase_domain"/>
</dbReference>
<dbReference type="InterPro" id="IPR036412">
    <property type="entry name" value="HAD-like_sf"/>
</dbReference>
<dbReference type="InterPro" id="IPR006439">
    <property type="entry name" value="HAD-SF_hydro_IA"/>
</dbReference>
<dbReference type="InterPro" id="IPR011949">
    <property type="entry name" value="HAD-SF_hydro_IA_REG-2-like"/>
</dbReference>
<dbReference type="InterPro" id="IPR044924">
    <property type="entry name" value="HAD-SF_hydro_IA_REG-2-like_cap"/>
</dbReference>
<dbReference type="InterPro" id="IPR023214">
    <property type="entry name" value="HAD_sf"/>
</dbReference>
<dbReference type="NCBIfam" id="TIGR02252">
    <property type="entry name" value="DREG-2"/>
    <property type="match status" value="1"/>
</dbReference>
<dbReference type="NCBIfam" id="TIGR01549">
    <property type="entry name" value="HAD-SF-IA-v1"/>
    <property type="match status" value="1"/>
</dbReference>
<dbReference type="NCBIfam" id="TIGR01509">
    <property type="entry name" value="HAD-SF-IA-v3"/>
    <property type="match status" value="1"/>
</dbReference>
<dbReference type="PANTHER" id="PTHR46191">
    <property type="match status" value="1"/>
</dbReference>
<dbReference type="PANTHER" id="PTHR46191:SF2">
    <property type="entry name" value="HALOACID DEHALOGENASE-LIKE HYDROLASE DOMAIN-CONTAINING PROTEIN 3"/>
    <property type="match status" value="1"/>
</dbReference>
<dbReference type="Pfam" id="PF00702">
    <property type="entry name" value="Hydrolase"/>
    <property type="match status" value="1"/>
</dbReference>
<dbReference type="PRINTS" id="PR00413">
    <property type="entry name" value="HADHALOGNASE"/>
</dbReference>
<dbReference type="SFLD" id="SFLDG01129">
    <property type="entry name" value="C1.5:_HAD__Beta-PGM__Phosphata"/>
    <property type="match status" value="1"/>
</dbReference>
<dbReference type="SFLD" id="SFLDS00003">
    <property type="entry name" value="Haloacid_Dehalogenase"/>
    <property type="match status" value="1"/>
</dbReference>
<dbReference type="SUPFAM" id="SSF56784">
    <property type="entry name" value="HAD-like"/>
    <property type="match status" value="1"/>
</dbReference>
<accession>Q5HZL9</accession>
<reference key="1">
    <citation type="submission" date="2005-01" db="EMBL/GenBank/DDBJ databases">
        <authorList>
            <consortium name="NIH - Xenopus Gene Collection (XGC) project"/>
        </authorList>
    </citation>
    <scope>NUCLEOTIDE SEQUENCE [LARGE SCALE MRNA]</scope>
    <source>
        <tissue>Egg</tissue>
    </source>
</reference>